<sequence>MEESSEPQLDAKSKVTSQLIDFEWKLGMAVSSDSCRSLKYPYVAVMLKVADHSGQVKNKSFEMTIPQFQNFYRQFKEIAAIIETV</sequence>
<protein>
    <recommendedName>
        <fullName>COMM domain-containing protein 6</fullName>
    </recommendedName>
</protein>
<name>COMD6_BOVIN</name>
<gene>
    <name type="primary">COMMD6</name>
</gene>
<evidence type="ECO:0000250" key="1">
    <source>
        <dbReference type="UniProtKB" id="Q7Z4G1"/>
    </source>
</evidence>
<evidence type="ECO:0000255" key="2">
    <source>
        <dbReference type="PROSITE-ProRule" id="PRU00602"/>
    </source>
</evidence>
<evidence type="ECO:0000305" key="3"/>
<organism>
    <name type="scientific">Bos taurus</name>
    <name type="common">Bovine</name>
    <dbReference type="NCBI Taxonomy" id="9913"/>
    <lineage>
        <taxon>Eukaryota</taxon>
        <taxon>Metazoa</taxon>
        <taxon>Chordata</taxon>
        <taxon>Craniata</taxon>
        <taxon>Vertebrata</taxon>
        <taxon>Euteleostomi</taxon>
        <taxon>Mammalia</taxon>
        <taxon>Eutheria</taxon>
        <taxon>Laurasiatheria</taxon>
        <taxon>Artiodactyla</taxon>
        <taxon>Ruminantia</taxon>
        <taxon>Pecora</taxon>
        <taxon>Bovidae</taxon>
        <taxon>Bovinae</taxon>
        <taxon>Bos</taxon>
    </lineage>
</organism>
<accession>Q2KIY0</accession>
<reference key="1">
    <citation type="submission" date="2006-01" db="EMBL/GenBank/DDBJ databases">
        <authorList>
            <consortium name="NIH - Mammalian Gene Collection (MGC) project"/>
        </authorList>
    </citation>
    <scope>NUCLEOTIDE SEQUENCE [LARGE SCALE MRNA]</scope>
    <source>
        <strain>Hereford</strain>
        <tissue>Testis</tissue>
    </source>
</reference>
<dbReference type="EMBL" id="BC112466">
    <property type="protein sequence ID" value="AAI12467.1"/>
    <property type="molecule type" value="mRNA"/>
</dbReference>
<dbReference type="RefSeq" id="NP_001106783.1">
    <property type="nucleotide sequence ID" value="NM_001113312.2"/>
</dbReference>
<dbReference type="RefSeq" id="NP_001421981.1">
    <property type="nucleotide sequence ID" value="NM_001435052.1"/>
</dbReference>
<dbReference type="SMR" id="Q2KIY0"/>
<dbReference type="FunCoup" id="Q2KIY0">
    <property type="interactions" value="739"/>
</dbReference>
<dbReference type="STRING" id="9913.ENSBTAP00000055877"/>
<dbReference type="PaxDb" id="9913-ENSBTAP00000055877"/>
<dbReference type="GeneID" id="616226"/>
<dbReference type="KEGG" id="bta:616226"/>
<dbReference type="CTD" id="170622"/>
<dbReference type="eggNOG" id="ENOG502S1WA">
    <property type="taxonomic scope" value="Eukaryota"/>
</dbReference>
<dbReference type="InParanoid" id="Q2KIY0"/>
<dbReference type="OrthoDB" id="10251827at2759"/>
<dbReference type="Proteomes" id="UP000009136">
    <property type="component" value="Unplaced"/>
</dbReference>
<dbReference type="GO" id="GO:0005737">
    <property type="term" value="C:cytoplasm"/>
    <property type="evidence" value="ECO:0007669"/>
    <property type="project" value="UniProtKB-SubCell"/>
</dbReference>
<dbReference type="GO" id="GO:0005634">
    <property type="term" value="C:nucleus"/>
    <property type="evidence" value="ECO:0007669"/>
    <property type="project" value="UniProtKB-SubCell"/>
</dbReference>
<dbReference type="GO" id="GO:0051059">
    <property type="term" value="F:NF-kappaB binding"/>
    <property type="evidence" value="ECO:0000318"/>
    <property type="project" value="GO_Central"/>
</dbReference>
<dbReference type="GO" id="GO:0007165">
    <property type="term" value="P:signal transduction"/>
    <property type="evidence" value="ECO:0000318"/>
    <property type="project" value="GO_Central"/>
</dbReference>
<dbReference type="InterPro" id="IPR017920">
    <property type="entry name" value="COMM"/>
</dbReference>
<dbReference type="InterPro" id="IPR047155">
    <property type="entry name" value="COMMD4/6/7/8"/>
</dbReference>
<dbReference type="PANTHER" id="PTHR16231">
    <property type="entry name" value="COMM DOMAIN-CONTAINING PROTEIN 4-8 FAMILY MEMBER"/>
    <property type="match status" value="1"/>
</dbReference>
<dbReference type="PANTHER" id="PTHR16231:SF5">
    <property type="entry name" value="COMM DOMAIN-CONTAINING PROTEIN 6"/>
    <property type="match status" value="1"/>
</dbReference>
<dbReference type="Pfam" id="PF07258">
    <property type="entry name" value="COMM_domain"/>
    <property type="match status" value="1"/>
</dbReference>
<dbReference type="PROSITE" id="PS51269">
    <property type="entry name" value="COMM"/>
    <property type="match status" value="1"/>
</dbReference>
<comment type="function">
    <text evidence="1">Scaffold protein in the commander complex that is essential for endosomal recycling of transmembrane cargos; the commander complex is composed of the CCC subcomplex and the retriever subcomplex (By similarity). May modulate activity of cullin-RING E3 ubiquitin ligase (CRL) complexes (By similarity). Down-regulates activation of NF-kappa-B (By similarity). Inhibits TNF-induced NFKB1 activation (By similarity).</text>
</comment>
<comment type="subunit">
    <text evidence="1">Component of the commander complex consisting of the CCC subcomplex and the retriever subcomplex (By similarity). Component of the CCC (COMMD/CCDC22/CCDC93) subcomplex consisting of COMMD1, COMMD2, COMMD3, COMMD4, COMMD5, COMMD6, COMMD7, COMMD8, COMMD9, COMMD10, CCDC22 and CCDC93; within the complex forms a heterodimer with COMMD1 (By similarity). May form a homodimer with isoform 1 (By similarity). Interacts with RELA, RELB, NFKB1/p105 (By similarity). Does not interact with NFKBIB (By similarity). Interacts with CCDC22, CCDC93, SCNN1B, CUL4A (By similarity).</text>
</comment>
<comment type="subcellular location">
    <subcellularLocation>
        <location evidence="1">Nucleus</location>
    </subcellularLocation>
    <subcellularLocation>
        <location evidence="1">Cytoplasm</location>
    </subcellularLocation>
</comment>
<comment type="similarity">
    <text evidence="3">Belongs to the COMM domain-containing protein 6 family.</text>
</comment>
<feature type="chain" id="PRO_0000260183" description="COMM domain-containing protein 6">
    <location>
        <begin position="1"/>
        <end position="85"/>
    </location>
</feature>
<feature type="domain" description="COMM" evidence="2">
    <location>
        <begin position="18"/>
        <end position="85"/>
    </location>
</feature>
<feature type="modified residue" description="N-acetylmethionine" evidence="1">
    <location>
        <position position="1"/>
    </location>
</feature>
<keyword id="KW-0007">Acetylation</keyword>
<keyword id="KW-0963">Cytoplasm</keyword>
<keyword id="KW-0539">Nucleus</keyword>
<keyword id="KW-1185">Reference proteome</keyword>
<keyword id="KW-0804">Transcription</keyword>
<keyword id="KW-0805">Transcription regulation</keyword>
<keyword id="KW-0833">Ubl conjugation pathway</keyword>
<proteinExistence type="inferred from homology"/>